<gene>
    <name evidence="1" type="primary">ackA</name>
    <name type="ordered locus">MSC_0270</name>
</gene>
<comment type="function">
    <text evidence="1">Catalyzes the formation of acetyl phosphate from acetate and ATP. Can also catalyze the reverse reaction.</text>
</comment>
<comment type="catalytic activity">
    <reaction evidence="1">
        <text>acetate + ATP = acetyl phosphate + ADP</text>
        <dbReference type="Rhea" id="RHEA:11352"/>
        <dbReference type="ChEBI" id="CHEBI:22191"/>
        <dbReference type="ChEBI" id="CHEBI:30089"/>
        <dbReference type="ChEBI" id="CHEBI:30616"/>
        <dbReference type="ChEBI" id="CHEBI:456216"/>
        <dbReference type="EC" id="2.7.2.1"/>
    </reaction>
</comment>
<comment type="cofactor">
    <cofactor evidence="1">
        <name>Mg(2+)</name>
        <dbReference type="ChEBI" id="CHEBI:18420"/>
    </cofactor>
    <cofactor evidence="1">
        <name>Mn(2+)</name>
        <dbReference type="ChEBI" id="CHEBI:29035"/>
    </cofactor>
    <text evidence="1">Mg(2+). Can also accept Mn(2+).</text>
</comment>
<comment type="pathway">
    <text evidence="1">Metabolic intermediate biosynthesis; acetyl-CoA biosynthesis; acetyl-CoA from acetate: step 1/2.</text>
</comment>
<comment type="subunit">
    <text evidence="1">Homodimer.</text>
</comment>
<comment type="subcellular location">
    <subcellularLocation>
        <location evidence="1">Cytoplasm</location>
    </subcellularLocation>
</comment>
<comment type="similarity">
    <text evidence="1">Belongs to the acetokinase family.</text>
</comment>
<dbReference type="EC" id="2.7.2.1" evidence="1"/>
<dbReference type="EMBL" id="BX293980">
    <property type="protein sequence ID" value="CAE76911.1"/>
    <property type="molecule type" value="Genomic_DNA"/>
</dbReference>
<dbReference type="RefSeq" id="NP_975269.1">
    <property type="nucleotide sequence ID" value="NC_005364.2"/>
</dbReference>
<dbReference type="RefSeq" id="WP_011166467.1">
    <property type="nucleotide sequence ID" value="NC_005364.2"/>
</dbReference>
<dbReference type="SMR" id="Q6MTX5"/>
<dbReference type="STRING" id="272632.MSC_0270"/>
<dbReference type="KEGG" id="mmy:MSC_0270"/>
<dbReference type="PATRIC" id="fig|272632.4.peg.291"/>
<dbReference type="eggNOG" id="COG0282">
    <property type="taxonomic scope" value="Bacteria"/>
</dbReference>
<dbReference type="HOGENOM" id="CLU_020352_0_1_14"/>
<dbReference type="UniPathway" id="UPA00340">
    <property type="reaction ID" value="UER00458"/>
</dbReference>
<dbReference type="Proteomes" id="UP000001016">
    <property type="component" value="Chromosome"/>
</dbReference>
<dbReference type="GO" id="GO:0005737">
    <property type="term" value="C:cytoplasm"/>
    <property type="evidence" value="ECO:0007669"/>
    <property type="project" value="UniProtKB-SubCell"/>
</dbReference>
<dbReference type="GO" id="GO:0008776">
    <property type="term" value="F:acetate kinase activity"/>
    <property type="evidence" value="ECO:0007669"/>
    <property type="project" value="UniProtKB-UniRule"/>
</dbReference>
<dbReference type="GO" id="GO:0005524">
    <property type="term" value="F:ATP binding"/>
    <property type="evidence" value="ECO:0007669"/>
    <property type="project" value="UniProtKB-KW"/>
</dbReference>
<dbReference type="GO" id="GO:0000287">
    <property type="term" value="F:magnesium ion binding"/>
    <property type="evidence" value="ECO:0007669"/>
    <property type="project" value="UniProtKB-UniRule"/>
</dbReference>
<dbReference type="GO" id="GO:0006083">
    <property type="term" value="P:acetate metabolic process"/>
    <property type="evidence" value="ECO:0007669"/>
    <property type="project" value="TreeGrafter"/>
</dbReference>
<dbReference type="GO" id="GO:0006085">
    <property type="term" value="P:acetyl-CoA biosynthetic process"/>
    <property type="evidence" value="ECO:0007669"/>
    <property type="project" value="UniProtKB-UniRule"/>
</dbReference>
<dbReference type="CDD" id="cd24010">
    <property type="entry name" value="ASKHA_NBD_AcK_PK"/>
    <property type="match status" value="1"/>
</dbReference>
<dbReference type="Gene3D" id="3.30.420.40">
    <property type="match status" value="2"/>
</dbReference>
<dbReference type="HAMAP" id="MF_00020">
    <property type="entry name" value="Acetate_kinase"/>
    <property type="match status" value="1"/>
</dbReference>
<dbReference type="InterPro" id="IPR004372">
    <property type="entry name" value="Ac/propionate_kinase"/>
</dbReference>
<dbReference type="InterPro" id="IPR000890">
    <property type="entry name" value="Aliphatic_acid_kin_short-chain"/>
</dbReference>
<dbReference type="InterPro" id="IPR023865">
    <property type="entry name" value="Aliphatic_acid_kinase_CS"/>
</dbReference>
<dbReference type="InterPro" id="IPR043129">
    <property type="entry name" value="ATPase_NBD"/>
</dbReference>
<dbReference type="NCBIfam" id="TIGR00016">
    <property type="entry name" value="ackA"/>
    <property type="match status" value="1"/>
</dbReference>
<dbReference type="PANTHER" id="PTHR21060">
    <property type="entry name" value="ACETATE KINASE"/>
    <property type="match status" value="1"/>
</dbReference>
<dbReference type="PANTHER" id="PTHR21060:SF15">
    <property type="entry name" value="ACETATE KINASE-RELATED"/>
    <property type="match status" value="1"/>
</dbReference>
<dbReference type="Pfam" id="PF00871">
    <property type="entry name" value="Acetate_kinase"/>
    <property type="match status" value="1"/>
</dbReference>
<dbReference type="PIRSF" id="PIRSF000722">
    <property type="entry name" value="Acetate_prop_kin"/>
    <property type="match status" value="1"/>
</dbReference>
<dbReference type="PRINTS" id="PR00471">
    <property type="entry name" value="ACETATEKNASE"/>
</dbReference>
<dbReference type="SUPFAM" id="SSF53067">
    <property type="entry name" value="Actin-like ATPase domain"/>
    <property type="match status" value="2"/>
</dbReference>
<dbReference type="PROSITE" id="PS01075">
    <property type="entry name" value="ACETATE_KINASE_1"/>
    <property type="match status" value="1"/>
</dbReference>
<dbReference type="PROSITE" id="PS01076">
    <property type="entry name" value="ACETATE_KINASE_2"/>
    <property type="match status" value="1"/>
</dbReference>
<accession>Q6MTX5</accession>
<organism>
    <name type="scientific">Mycoplasma mycoides subsp. mycoides SC (strain CCUG 32753 / NCTC 10114 / PG1)</name>
    <dbReference type="NCBI Taxonomy" id="272632"/>
    <lineage>
        <taxon>Bacteria</taxon>
        <taxon>Bacillati</taxon>
        <taxon>Mycoplasmatota</taxon>
        <taxon>Mollicutes</taxon>
        <taxon>Mycoplasmataceae</taxon>
        <taxon>Mycoplasma</taxon>
    </lineage>
</organism>
<keyword id="KW-0067">ATP-binding</keyword>
<keyword id="KW-0963">Cytoplasm</keyword>
<keyword id="KW-0418">Kinase</keyword>
<keyword id="KW-0460">Magnesium</keyword>
<keyword id="KW-0479">Metal-binding</keyword>
<keyword id="KW-0547">Nucleotide-binding</keyword>
<keyword id="KW-1185">Reference proteome</keyword>
<keyword id="KW-0808">Transferase</keyword>
<sequence length="393" mass="44047">MILVINSGSSSIKFKLFDTSKTIEPILDGLAERIGIDGFLKFEHNNQKYKFEDPLPDHEHAIQLILNKLLELKIISNIDEINGVGFRVVHGGEISHSSIITDEILSKIQDSVKLAPLHNPAAIIAIKAVKKLMPNTSMVACFDTAFHQTMPEVNYLYTVPYKWYEEFGVRKYGFHGISYEYIVNKSSEILNKKKENLNLIVCHLGNGASISCIKDGKSYDTSMGLTPLAGLMMGTRSGDIDVSICEYIAKQTNTDIFSITQTLNKQSGLLGLSQVSADMRDVLEQYDRNDKKAVVAVEKYVQIVADFIVKYANYLDNIDAVVFTAGIGENADVIRDLICKKVKLLNLQIDQDKNQAKYSDYKLISSEKSKIPVYAIRTNEEKMICLDTLNLIK</sequence>
<reference key="1">
    <citation type="journal article" date="2004" name="Genome Res.">
        <title>The genome sequence of Mycoplasma mycoides subsp. mycoides SC type strain PG1T, the causative agent of contagious bovine pleuropneumonia (CBPP).</title>
        <authorList>
            <person name="Westberg J."/>
            <person name="Persson A."/>
            <person name="Holmberg A."/>
            <person name="Goesmann A."/>
            <person name="Lundeberg J."/>
            <person name="Johansson K.-E."/>
            <person name="Pettersson B."/>
            <person name="Uhlen M."/>
        </authorList>
    </citation>
    <scope>NUCLEOTIDE SEQUENCE [LARGE SCALE GENOMIC DNA]</scope>
    <source>
        <strain>CCUG 32753 / NCTC 10114 / PG1</strain>
    </source>
</reference>
<proteinExistence type="inferred from homology"/>
<feature type="chain" id="PRO_0000107587" description="Acetate kinase">
    <location>
        <begin position="1"/>
        <end position="393"/>
    </location>
</feature>
<feature type="active site" description="Proton donor/acceptor" evidence="1">
    <location>
        <position position="143"/>
    </location>
</feature>
<feature type="binding site" evidence="1">
    <location>
        <position position="6"/>
    </location>
    <ligand>
        <name>Mg(2+)</name>
        <dbReference type="ChEBI" id="CHEBI:18420"/>
    </ligand>
</feature>
<feature type="binding site" evidence="1">
    <location>
        <position position="13"/>
    </location>
    <ligand>
        <name>ATP</name>
        <dbReference type="ChEBI" id="CHEBI:30616"/>
    </ligand>
</feature>
<feature type="binding site" evidence="1">
    <location>
        <position position="87"/>
    </location>
    <ligand>
        <name>substrate</name>
    </ligand>
</feature>
<feature type="binding site" evidence="1">
    <location>
        <begin position="203"/>
        <end position="207"/>
    </location>
    <ligand>
        <name>ATP</name>
        <dbReference type="ChEBI" id="CHEBI:30616"/>
    </ligand>
</feature>
<feature type="binding site" evidence="1">
    <location>
        <begin position="278"/>
        <end position="280"/>
    </location>
    <ligand>
        <name>ATP</name>
        <dbReference type="ChEBI" id="CHEBI:30616"/>
    </ligand>
</feature>
<feature type="binding site" evidence="1">
    <location>
        <begin position="326"/>
        <end position="330"/>
    </location>
    <ligand>
        <name>ATP</name>
        <dbReference type="ChEBI" id="CHEBI:30616"/>
    </ligand>
</feature>
<feature type="binding site" evidence="1">
    <location>
        <position position="380"/>
    </location>
    <ligand>
        <name>Mg(2+)</name>
        <dbReference type="ChEBI" id="CHEBI:18420"/>
    </ligand>
</feature>
<feature type="site" description="Transition state stabilizer" evidence="1">
    <location>
        <position position="175"/>
    </location>
</feature>
<feature type="site" description="Transition state stabilizer" evidence="1">
    <location>
        <position position="236"/>
    </location>
</feature>
<name>ACKA_MYCMS</name>
<evidence type="ECO:0000255" key="1">
    <source>
        <dbReference type="HAMAP-Rule" id="MF_00020"/>
    </source>
</evidence>
<protein>
    <recommendedName>
        <fullName evidence="1">Acetate kinase</fullName>
        <ecNumber evidence="1">2.7.2.1</ecNumber>
    </recommendedName>
    <alternativeName>
        <fullName evidence="1">Acetokinase</fullName>
    </alternativeName>
</protein>